<reference key="1">
    <citation type="journal article" date="2002" name="Nat. Biotechnol.">
        <title>Genome sequence of the dissimilatory metal ion-reducing bacterium Shewanella oneidensis.</title>
        <authorList>
            <person name="Heidelberg J.F."/>
            <person name="Paulsen I.T."/>
            <person name="Nelson K.E."/>
            <person name="Gaidos E.J."/>
            <person name="Nelson W.C."/>
            <person name="Read T.D."/>
            <person name="Eisen J.A."/>
            <person name="Seshadri R."/>
            <person name="Ward N.L."/>
            <person name="Methe B.A."/>
            <person name="Clayton R.A."/>
            <person name="Meyer T."/>
            <person name="Tsapin A."/>
            <person name="Scott J."/>
            <person name="Beanan M.J."/>
            <person name="Brinkac L.M."/>
            <person name="Daugherty S.C."/>
            <person name="DeBoy R.T."/>
            <person name="Dodson R.J."/>
            <person name="Durkin A.S."/>
            <person name="Haft D.H."/>
            <person name="Kolonay J.F."/>
            <person name="Madupu R."/>
            <person name="Peterson J.D."/>
            <person name="Umayam L.A."/>
            <person name="White O."/>
            <person name="Wolf A.M."/>
            <person name="Vamathevan J.J."/>
            <person name="Weidman J.F."/>
            <person name="Impraim M."/>
            <person name="Lee K."/>
            <person name="Berry K.J."/>
            <person name="Lee C."/>
            <person name="Mueller J."/>
            <person name="Khouri H.M."/>
            <person name="Gill J."/>
            <person name="Utterback T.R."/>
            <person name="McDonald L.A."/>
            <person name="Feldblyum T.V."/>
            <person name="Smith H.O."/>
            <person name="Venter J.C."/>
            <person name="Nealson K.H."/>
            <person name="Fraser C.M."/>
        </authorList>
    </citation>
    <scope>NUCLEOTIDE SEQUENCE [LARGE SCALE GENOMIC DNA]</scope>
    <source>
        <strain>ATCC 700550 / JCM 31522 / CIP 106686 / LMG 19005 / NCIMB 14063 / MR-1</strain>
    </source>
</reference>
<evidence type="ECO:0000255" key="1">
    <source>
        <dbReference type="HAMAP-Rule" id="MF_00443"/>
    </source>
</evidence>
<accession>Q8EEE1</accession>
<dbReference type="EC" id="2.8.1.10" evidence="1"/>
<dbReference type="EMBL" id="AE014299">
    <property type="protein sequence ID" value="AAN55475.1"/>
    <property type="molecule type" value="Genomic_DNA"/>
</dbReference>
<dbReference type="RefSeq" id="NP_718031.1">
    <property type="nucleotide sequence ID" value="NC_004347.2"/>
</dbReference>
<dbReference type="RefSeq" id="WP_011072417.1">
    <property type="nucleotide sequence ID" value="NC_004347.2"/>
</dbReference>
<dbReference type="SMR" id="Q8EEE1"/>
<dbReference type="STRING" id="211586.SO_2441"/>
<dbReference type="PaxDb" id="211586-SO_2441"/>
<dbReference type="KEGG" id="son:SO_2441"/>
<dbReference type="PATRIC" id="fig|211586.12.peg.2349"/>
<dbReference type="eggNOG" id="COG2022">
    <property type="taxonomic scope" value="Bacteria"/>
</dbReference>
<dbReference type="HOGENOM" id="CLU_062233_1_0_6"/>
<dbReference type="OrthoDB" id="9805935at2"/>
<dbReference type="PhylomeDB" id="Q8EEE1"/>
<dbReference type="BioCyc" id="SONE211586:G1GMP-2232-MONOMER"/>
<dbReference type="UniPathway" id="UPA00060"/>
<dbReference type="Proteomes" id="UP000008186">
    <property type="component" value="Chromosome"/>
</dbReference>
<dbReference type="GO" id="GO:1902508">
    <property type="term" value="C:2-iminoacetate synthase complex"/>
    <property type="evidence" value="ECO:0000318"/>
    <property type="project" value="GO_Central"/>
</dbReference>
<dbReference type="GO" id="GO:0005737">
    <property type="term" value="C:cytoplasm"/>
    <property type="evidence" value="ECO:0007669"/>
    <property type="project" value="UniProtKB-SubCell"/>
</dbReference>
<dbReference type="GO" id="GO:1990107">
    <property type="term" value="F:thiazole synthase activity"/>
    <property type="evidence" value="ECO:0007669"/>
    <property type="project" value="UniProtKB-EC"/>
</dbReference>
<dbReference type="GO" id="GO:0009228">
    <property type="term" value="P:thiamine biosynthetic process"/>
    <property type="evidence" value="ECO:0000318"/>
    <property type="project" value="GO_Central"/>
</dbReference>
<dbReference type="GO" id="GO:0009229">
    <property type="term" value="P:thiamine diphosphate biosynthetic process"/>
    <property type="evidence" value="ECO:0000318"/>
    <property type="project" value="GO_Central"/>
</dbReference>
<dbReference type="CDD" id="cd04728">
    <property type="entry name" value="ThiG"/>
    <property type="match status" value="1"/>
</dbReference>
<dbReference type="FunFam" id="3.20.20.70:FF:000049">
    <property type="entry name" value="Thiazole synthase"/>
    <property type="match status" value="1"/>
</dbReference>
<dbReference type="Gene3D" id="3.20.20.70">
    <property type="entry name" value="Aldolase class I"/>
    <property type="match status" value="1"/>
</dbReference>
<dbReference type="HAMAP" id="MF_00443">
    <property type="entry name" value="ThiG"/>
    <property type="match status" value="1"/>
</dbReference>
<dbReference type="InterPro" id="IPR013785">
    <property type="entry name" value="Aldolase_TIM"/>
</dbReference>
<dbReference type="InterPro" id="IPR033983">
    <property type="entry name" value="Thiazole_synthase_ThiG"/>
</dbReference>
<dbReference type="InterPro" id="IPR008867">
    <property type="entry name" value="ThiG"/>
</dbReference>
<dbReference type="PANTHER" id="PTHR34266">
    <property type="entry name" value="THIAZOLE SYNTHASE"/>
    <property type="match status" value="1"/>
</dbReference>
<dbReference type="PANTHER" id="PTHR34266:SF2">
    <property type="entry name" value="THIAZOLE SYNTHASE"/>
    <property type="match status" value="1"/>
</dbReference>
<dbReference type="Pfam" id="PF05690">
    <property type="entry name" value="ThiG"/>
    <property type="match status" value="1"/>
</dbReference>
<dbReference type="SUPFAM" id="SSF110399">
    <property type="entry name" value="ThiG-like"/>
    <property type="match status" value="1"/>
</dbReference>
<name>THIG_SHEON</name>
<protein>
    <recommendedName>
        <fullName evidence="1">Thiazole synthase</fullName>
        <ecNumber evidence="1">2.8.1.10</ecNumber>
    </recommendedName>
</protein>
<keyword id="KW-0963">Cytoplasm</keyword>
<keyword id="KW-1185">Reference proteome</keyword>
<keyword id="KW-0704">Schiff base</keyword>
<keyword id="KW-0784">Thiamine biosynthesis</keyword>
<keyword id="KW-0808">Transferase</keyword>
<comment type="function">
    <text evidence="1">Catalyzes the rearrangement of 1-deoxy-D-xylulose 5-phosphate (DXP) to produce the thiazole phosphate moiety of thiamine. Sulfur is provided by the thiocarboxylate moiety of the carrier protein ThiS. In vitro, sulfur can be provided by H(2)S.</text>
</comment>
<comment type="catalytic activity">
    <reaction evidence="1">
        <text>[ThiS sulfur-carrier protein]-C-terminal-Gly-aminoethanethioate + 2-iminoacetate + 1-deoxy-D-xylulose 5-phosphate = [ThiS sulfur-carrier protein]-C-terminal Gly-Gly + 2-[(2R,5Z)-2-carboxy-4-methylthiazol-5(2H)-ylidene]ethyl phosphate + 2 H2O + H(+)</text>
        <dbReference type="Rhea" id="RHEA:26297"/>
        <dbReference type="Rhea" id="RHEA-COMP:12909"/>
        <dbReference type="Rhea" id="RHEA-COMP:19908"/>
        <dbReference type="ChEBI" id="CHEBI:15377"/>
        <dbReference type="ChEBI" id="CHEBI:15378"/>
        <dbReference type="ChEBI" id="CHEBI:57792"/>
        <dbReference type="ChEBI" id="CHEBI:62899"/>
        <dbReference type="ChEBI" id="CHEBI:77846"/>
        <dbReference type="ChEBI" id="CHEBI:90778"/>
        <dbReference type="ChEBI" id="CHEBI:232372"/>
        <dbReference type="EC" id="2.8.1.10"/>
    </reaction>
</comment>
<comment type="pathway">
    <text evidence="1">Cofactor biosynthesis; thiamine diphosphate biosynthesis.</text>
</comment>
<comment type="subunit">
    <text evidence="1">Homotetramer. Forms heterodimers with either ThiH or ThiS.</text>
</comment>
<comment type="subcellular location">
    <subcellularLocation>
        <location evidence="1">Cytoplasm</location>
    </subcellularLocation>
</comment>
<comment type="similarity">
    <text evidence="1">Belongs to the ThiG family.</text>
</comment>
<sequence>MLTVAGVEFESRLFTGTGKFSSSQLMLEAINASKSQLVTVSMKRIDLKTGADDLLTPLRQAGVRLLPNTSGARNAKEAIFAAELAREMLGTQWIKLEIHPDPKYLMPDAVETLTAAQILCERGFIVMPYVHADPVLCRRLEDVGCAAVMPLASPIGTNQGLVTEPFIKMIIEQARVPVVIDAGIGAPSHAAHAMELGADAVLVNTAIASSASPIEMALCFRDAVNCGRRAFEAGLGRVQTQAVHTSPLTGFLQQ</sequence>
<proteinExistence type="inferred from homology"/>
<organism>
    <name type="scientific">Shewanella oneidensis (strain ATCC 700550 / JCM 31522 / CIP 106686 / LMG 19005 / NCIMB 14063 / MR-1)</name>
    <dbReference type="NCBI Taxonomy" id="211586"/>
    <lineage>
        <taxon>Bacteria</taxon>
        <taxon>Pseudomonadati</taxon>
        <taxon>Pseudomonadota</taxon>
        <taxon>Gammaproteobacteria</taxon>
        <taxon>Alteromonadales</taxon>
        <taxon>Shewanellaceae</taxon>
        <taxon>Shewanella</taxon>
    </lineage>
</organism>
<feature type="chain" id="PRO_0000162858" description="Thiazole synthase">
    <location>
        <begin position="1"/>
        <end position="254"/>
    </location>
</feature>
<feature type="active site" description="Schiff-base intermediate with DXP" evidence="1">
    <location>
        <position position="95"/>
    </location>
</feature>
<feature type="binding site" evidence="1">
    <location>
        <position position="156"/>
    </location>
    <ligand>
        <name>1-deoxy-D-xylulose 5-phosphate</name>
        <dbReference type="ChEBI" id="CHEBI:57792"/>
    </ligand>
</feature>
<feature type="binding site" evidence="1">
    <location>
        <begin position="182"/>
        <end position="183"/>
    </location>
    <ligand>
        <name>1-deoxy-D-xylulose 5-phosphate</name>
        <dbReference type="ChEBI" id="CHEBI:57792"/>
    </ligand>
</feature>
<feature type="binding site" evidence="1">
    <location>
        <begin position="204"/>
        <end position="205"/>
    </location>
    <ligand>
        <name>1-deoxy-D-xylulose 5-phosphate</name>
        <dbReference type="ChEBI" id="CHEBI:57792"/>
    </ligand>
</feature>
<gene>
    <name evidence="1" type="primary">thiG</name>
    <name type="ordered locus">SO_2441</name>
</gene>